<reference key="1">
    <citation type="journal article" date="1993" name="Mol. Microbiol.">
        <title>Characterization of genes involved in molybdenum transport in Azotobacter vinelandii.</title>
        <authorList>
            <person name="Luque F."/>
            <person name="Mitchenall L.A."/>
            <person name="Chapman M."/>
            <person name="Christine R."/>
            <person name="Pau R.N."/>
        </authorList>
    </citation>
    <scope>NUCLEOTIDE SEQUENCE [GENOMIC DNA]</scope>
    <source>
        <strain>DJ35</strain>
    </source>
</reference>
<reference key="2">
    <citation type="journal article" date="1995" name="J. Bacteriol.">
        <title>Mutational analysis of genes of the mod locus involved in molybdenum transport, homeostasis, and processing in Azotobacter vinelandii.</title>
        <authorList>
            <person name="Mouncey N.J."/>
            <person name="Mitchenall L.A."/>
            <person name="Pau R.N."/>
        </authorList>
    </citation>
    <scope>GENE NAME</scope>
</reference>
<organism>
    <name type="scientific">Azotobacter vinelandii</name>
    <dbReference type="NCBI Taxonomy" id="354"/>
    <lineage>
        <taxon>Bacteria</taxon>
        <taxon>Pseudomonadati</taxon>
        <taxon>Pseudomonadota</taxon>
        <taxon>Gammaproteobacteria</taxon>
        <taxon>Pseudomonadales</taxon>
        <taxon>Pseudomonadaceae</taxon>
        <taxon>Azotobacter</taxon>
    </lineage>
</organism>
<gene>
    <name type="primary">modA</name>
    <name type="synonym">modB</name>
</gene>
<name>MODA_AZOVI</name>
<keyword id="KW-0479">Metal-binding</keyword>
<keyword id="KW-0500">Molybdenum</keyword>
<keyword id="KW-0574">Periplasm</keyword>
<keyword id="KW-0732">Signal</keyword>
<keyword id="KW-0813">Transport</keyword>
<keyword id="KW-0826">Tungsten</keyword>
<evidence type="ECO:0000250" key="1">
    <source>
        <dbReference type="UniProtKB" id="P37329"/>
    </source>
</evidence>
<evidence type="ECO:0000255" key="2"/>
<evidence type="ECO:0000305" key="3"/>
<dbReference type="EMBL" id="X69077">
    <property type="protein sequence ID" value="CAA48820.1"/>
    <property type="molecule type" value="Genomic_DNA"/>
</dbReference>
<dbReference type="PIR" id="S31044">
    <property type="entry name" value="S31044"/>
</dbReference>
<dbReference type="RefSeq" id="WP_012703508.1">
    <property type="nucleotide sequence ID" value="NZ_FPKM01000015.1"/>
</dbReference>
<dbReference type="SMR" id="P37734"/>
<dbReference type="GeneID" id="88187902"/>
<dbReference type="OMA" id="DTGHKAV"/>
<dbReference type="GO" id="GO:0042597">
    <property type="term" value="C:periplasmic space"/>
    <property type="evidence" value="ECO:0007669"/>
    <property type="project" value="UniProtKB-SubCell"/>
</dbReference>
<dbReference type="GO" id="GO:0046872">
    <property type="term" value="F:metal ion binding"/>
    <property type="evidence" value="ECO:0007669"/>
    <property type="project" value="UniProtKB-KW"/>
</dbReference>
<dbReference type="GO" id="GO:0030973">
    <property type="term" value="F:molybdate ion binding"/>
    <property type="evidence" value="ECO:0000250"/>
    <property type="project" value="UniProtKB"/>
</dbReference>
<dbReference type="GO" id="GO:0015689">
    <property type="term" value="P:molybdate ion transport"/>
    <property type="evidence" value="ECO:0007669"/>
    <property type="project" value="InterPro"/>
</dbReference>
<dbReference type="CDD" id="cd13539">
    <property type="entry name" value="PBP2_AvModA"/>
    <property type="match status" value="1"/>
</dbReference>
<dbReference type="FunFam" id="3.40.190.10:FF:000035">
    <property type="entry name" value="Molybdate ABC transporter substrate-binding protein"/>
    <property type="match status" value="1"/>
</dbReference>
<dbReference type="Gene3D" id="3.40.190.10">
    <property type="entry name" value="Periplasmic binding protein-like II"/>
    <property type="match status" value="2"/>
</dbReference>
<dbReference type="InterPro" id="IPR044084">
    <property type="entry name" value="AvModA-like_subst-bd"/>
</dbReference>
<dbReference type="InterPro" id="IPR005950">
    <property type="entry name" value="ModA"/>
</dbReference>
<dbReference type="InterPro" id="IPR050682">
    <property type="entry name" value="ModA/WtpA"/>
</dbReference>
<dbReference type="NCBIfam" id="TIGR01256">
    <property type="entry name" value="modA"/>
    <property type="match status" value="1"/>
</dbReference>
<dbReference type="PANTHER" id="PTHR30632">
    <property type="entry name" value="MOLYBDATE-BINDING PERIPLASMIC PROTEIN"/>
    <property type="match status" value="1"/>
</dbReference>
<dbReference type="PANTHER" id="PTHR30632:SF14">
    <property type="entry name" value="TUNGSTATE_MOLYBDATE_CHROMATE-BINDING PROTEIN MODA"/>
    <property type="match status" value="1"/>
</dbReference>
<dbReference type="Pfam" id="PF13531">
    <property type="entry name" value="SBP_bac_11"/>
    <property type="match status" value="1"/>
</dbReference>
<dbReference type="PIRSF" id="PIRSF004846">
    <property type="entry name" value="ModA"/>
    <property type="match status" value="1"/>
</dbReference>
<dbReference type="SUPFAM" id="SSF53850">
    <property type="entry name" value="Periplasmic binding protein-like II"/>
    <property type="match status" value="1"/>
</dbReference>
<proteinExistence type="inferred from homology"/>
<sequence>MSFSLSRLVVALGAGLLACAAQAAEVQVAVAANFTAPMKDIASQFEKDTGHKVITSFGPTGGFYSQIQNGAPFEVFLAADDTTPEKLEKEGGTVAGSRFTYAVGKLVLWSAKPGYVDDQGAVLKKNAFKHLSIANPKTAPYGAAAVQVLAKLGLTEATKSKLVEGASIAQAHQFVATGNAELGFVALSQVYKDGKLTGGSGWNVPGDLYEPIRQDAVILTKGKDNPAAQALVDYLKGPKATEVIKAYGYGLQ</sequence>
<accession>P37734</accession>
<feature type="signal peptide" evidence="2">
    <location>
        <begin position="1"/>
        <end position="23"/>
    </location>
</feature>
<feature type="chain" id="PRO_0000031826" description="Molybdate-binding protein ModA">
    <location>
        <begin position="24"/>
        <end position="252"/>
    </location>
</feature>
<feature type="binding site" evidence="1">
    <location>
        <position position="60"/>
    </location>
    <ligand>
        <name>molybdate</name>
        <dbReference type="ChEBI" id="CHEBI:36264"/>
    </ligand>
</feature>
<feature type="binding site" evidence="1">
    <location>
        <position position="168"/>
    </location>
    <ligand>
        <name>molybdate</name>
        <dbReference type="ChEBI" id="CHEBI:36264"/>
    </ligand>
</feature>
<comment type="function">
    <text>Involved in the transport of molybdenum into the cell.</text>
</comment>
<comment type="subunit">
    <text evidence="3">The complex is composed of two ATP-binding proteins (ModC), two transmembrane proteins (ModB) and a solute-binding protein (ModA).</text>
</comment>
<comment type="subcellular location">
    <subcellularLocation>
        <location>Periplasm</location>
    </subcellularLocation>
</comment>
<comment type="similarity">
    <text evidence="3">Belongs to the bacterial solute-binding protein ModA family.</text>
</comment>
<protein>
    <recommendedName>
        <fullName evidence="3">Molybdate-binding protein ModA</fullName>
    </recommendedName>
    <alternativeName>
        <fullName evidence="3">Molybdate/tungstate-binding protein ModA</fullName>
    </alternativeName>
</protein>